<comment type="catalytic activity">
    <reaction evidence="1">
        <text>tRNA(Cys) + L-cysteine + ATP = L-cysteinyl-tRNA(Cys) + AMP + diphosphate</text>
        <dbReference type="Rhea" id="RHEA:17773"/>
        <dbReference type="Rhea" id="RHEA-COMP:9661"/>
        <dbReference type="Rhea" id="RHEA-COMP:9679"/>
        <dbReference type="ChEBI" id="CHEBI:30616"/>
        <dbReference type="ChEBI" id="CHEBI:33019"/>
        <dbReference type="ChEBI" id="CHEBI:35235"/>
        <dbReference type="ChEBI" id="CHEBI:78442"/>
        <dbReference type="ChEBI" id="CHEBI:78517"/>
        <dbReference type="ChEBI" id="CHEBI:456215"/>
        <dbReference type="EC" id="6.1.1.16"/>
    </reaction>
</comment>
<comment type="cofactor">
    <cofactor evidence="1">
        <name>Zn(2+)</name>
        <dbReference type="ChEBI" id="CHEBI:29105"/>
    </cofactor>
    <text evidence="1">Binds 1 zinc ion per subunit.</text>
</comment>
<comment type="subunit">
    <text evidence="1">Monomer.</text>
</comment>
<comment type="subcellular location">
    <subcellularLocation>
        <location evidence="1">Cytoplasm</location>
    </subcellularLocation>
</comment>
<comment type="similarity">
    <text evidence="1">Belongs to the class-I aminoacyl-tRNA synthetase family.</text>
</comment>
<gene>
    <name evidence="1" type="primary">cysS</name>
    <name type="ordered locus">CHU_3418</name>
</gene>
<dbReference type="EC" id="6.1.1.16" evidence="1"/>
<dbReference type="EMBL" id="CP000383">
    <property type="protein sequence ID" value="ABG60654.1"/>
    <property type="molecule type" value="Genomic_DNA"/>
</dbReference>
<dbReference type="RefSeq" id="WP_011586761.1">
    <property type="nucleotide sequence ID" value="NC_008255.1"/>
</dbReference>
<dbReference type="SMR" id="Q11PK9"/>
<dbReference type="STRING" id="269798.CHU_3418"/>
<dbReference type="KEGG" id="chu:CHU_3418"/>
<dbReference type="eggNOG" id="COG0215">
    <property type="taxonomic scope" value="Bacteria"/>
</dbReference>
<dbReference type="HOGENOM" id="CLU_013528_0_1_10"/>
<dbReference type="OrthoDB" id="9815130at2"/>
<dbReference type="Proteomes" id="UP000001822">
    <property type="component" value="Chromosome"/>
</dbReference>
<dbReference type="GO" id="GO:0005829">
    <property type="term" value="C:cytosol"/>
    <property type="evidence" value="ECO:0007669"/>
    <property type="project" value="TreeGrafter"/>
</dbReference>
<dbReference type="GO" id="GO:0005524">
    <property type="term" value="F:ATP binding"/>
    <property type="evidence" value="ECO:0007669"/>
    <property type="project" value="UniProtKB-UniRule"/>
</dbReference>
<dbReference type="GO" id="GO:0004817">
    <property type="term" value="F:cysteine-tRNA ligase activity"/>
    <property type="evidence" value="ECO:0007669"/>
    <property type="project" value="UniProtKB-UniRule"/>
</dbReference>
<dbReference type="GO" id="GO:0008270">
    <property type="term" value="F:zinc ion binding"/>
    <property type="evidence" value="ECO:0007669"/>
    <property type="project" value="UniProtKB-UniRule"/>
</dbReference>
<dbReference type="GO" id="GO:0006423">
    <property type="term" value="P:cysteinyl-tRNA aminoacylation"/>
    <property type="evidence" value="ECO:0007669"/>
    <property type="project" value="UniProtKB-UniRule"/>
</dbReference>
<dbReference type="CDD" id="cd00672">
    <property type="entry name" value="CysRS_core"/>
    <property type="match status" value="1"/>
</dbReference>
<dbReference type="FunFam" id="3.40.50.620:FF:000140">
    <property type="entry name" value="Cysteine--tRNA ligase"/>
    <property type="match status" value="1"/>
</dbReference>
<dbReference type="Gene3D" id="1.20.120.1910">
    <property type="entry name" value="Cysteine-tRNA ligase, C-terminal anti-codon recognition domain"/>
    <property type="match status" value="1"/>
</dbReference>
<dbReference type="Gene3D" id="3.40.50.620">
    <property type="entry name" value="HUPs"/>
    <property type="match status" value="1"/>
</dbReference>
<dbReference type="HAMAP" id="MF_00041">
    <property type="entry name" value="Cys_tRNA_synth"/>
    <property type="match status" value="1"/>
</dbReference>
<dbReference type="InterPro" id="IPR015803">
    <property type="entry name" value="Cys-tRNA-ligase"/>
</dbReference>
<dbReference type="InterPro" id="IPR015273">
    <property type="entry name" value="Cys-tRNA-synt_Ia_DALR"/>
</dbReference>
<dbReference type="InterPro" id="IPR024909">
    <property type="entry name" value="Cys-tRNA/MSH_ligase"/>
</dbReference>
<dbReference type="InterPro" id="IPR014729">
    <property type="entry name" value="Rossmann-like_a/b/a_fold"/>
</dbReference>
<dbReference type="InterPro" id="IPR032678">
    <property type="entry name" value="tRNA-synt_1_cat_dom"/>
</dbReference>
<dbReference type="InterPro" id="IPR009080">
    <property type="entry name" value="tRNAsynth_Ia_anticodon-bd"/>
</dbReference>
<dbReference type="NCBIfam" id="TIGR00435">
    <property type="entry name" value="cysS"/>
    <property type="match status" value="1"/>
</dbReference>
<dbReference type="PANTHER" id="PTHR10890:SF3">
    <property type="entry name" value="CYSTEINE--TRNA LIGASE, CYTOPLASMIC"/>
    <property type="match status" value="1"/>
</dbReference>
<dbReference type="PANTHER" id="PTHR10890">
    <property type="entry name" value="CYSTEINYL-TRNA SYNTHETASE"/>
    <property type="match status" value="1"/>
</dbReference>
<dbReference type="Pfam" id="PF09190">
    <property type="entry name" value="DALR_2"/>
    <property type="match status" value="1"/>
</dbReference>
<dbReference type="Pfam" id="PF01406">
    <property type="entry name" value="tRNA-synt_1e"/>
    <property type="match status" value="1"/>
</dbReference>
<dbReference type="PRINTS" id="PR00983">
    <property type="entry name" value="TRNASYNTHCYS"/>
</dbReference>
<dbReference type="SMART" id="SM00840">
    <property type="entry name" value="DALR_2"/>
    <property type="match status" value="1"/>
</dbReference>
<dbReference type="SUPFAM" id="SSF47323">
    <property type="entry name" value="Anticodon-binding domain of a subclass of class I aminoacyl-tRNA synthetases"/>
    <property type="match status" value="1"/>
</dbReference>
<dbReference type="SUPFAM" id="SSF52374">
    <property type="entry name" value="Nucleotidylyl transferase"/>
    <property type="match status" value="1"/>
</dbReference>
<accession>Q11PK9</accession>
<evidence type="ECO:0000255" key="1">
    <source>
        <dbReference type="HAMAP-Rule" id="MF_00041"/>
    </source>
</evidence>
<name>SYC_CYTH3</name>
<proteinExistence type="inferred from homology"/>
<reference key="1">
    <citation type="journal article" date="2007" name="Appl. Environ. Microbiol.">
        <title>Genome sequence of the cellulolytic gliding bacterium Cytophaga hutchinsonii.</title>
        <authorList>
            <person name="Xie G."/>
            <person name="Bruce D.C."/>
            <person name="Challacombe J.F."/>
            <person name="Chertkov O."/>
            <person name="Detter J.C."/>
            <person name="Gilna P."/>
            <person name="Han C.S."/>
            <person name="Lucas S."/>
            <person name="Misra M."/>
            <person name="Myers G.L."/>
            <person name="Richardson P."/>
            <person name="Tapia R."/>
            <person name="Thayer N."/>
            <person name="Thompson L.S."/>
            <person name="Brettin T.S."/>
            <person name="Henrissat B."/>
            <person name="Wilson D.B."/>
            <person name="McBride M.J."/>
        </authorList>
    </citation>
    <scope>NUCLEOTIDE SEQUENCE [LARGE SCALE GENOMIC DNA]</scope>
    <source>
        <strain>ATCC 33406 / DSM 1761 / JCM 20678 / CIP 103989 / IAM 12607 / NBRC 15051 / NCIMB 9469 / D465</strain>
    </source>
</reference>
<sequence length="497" mass="56694">MTAEKLVVYNTLTRKKEVFEPIHAPHVGMYVCGPTVYGEGHLGHARSAITFDIVFRYLQHLKYQVRYVRNITDVGHLEHDADEGEDKIAKKAKLEKVEPMEIVQRYTEYYHDALRKLNVLPPSIEPTASGHIPEQIRMVEEILSSGYAYENTGSVYFDVEKFTNDKNKYGHLSGRILEDLISGTRSLDGQHTKKSSADFALWKLASPEHIMKWDSPWGKGFPGWHLECSAMSTKYLGETFDIHGGGMDLMFPHHECEIAQSVAANKKEPAKYWLHNNMITINGQKMGKSLGNFITLNELFTGNHTLLEQAYSPMTIRFFTLQAHYRSTLDFSNDALKAANKAFRKVMNGMKMLNSLEYSTDIVEQDQALNDEINKIIADCYKGMSDDFNTAITIASLFNLIKKINVFYLQQKSTAVLSKETFEHMKTSYTTLVHDVLGLVDEVAVNPEGLIKGLLDLYKEAKENKQYDKVDQIRAYFKQQGLAIKDMKHGIDWAYEE</sequence>
<organism>
    <name type="scientific">Cytophaga hutchinsonii (strain ATCC 33406 / DSM 1761 / CIP 103989 / NBRC 15051 / NCIMB 9469 / D465)</name>
    <dbReference type="NCBI Taxonomy" id="269798"/>
    <lineage>
        <taxon>Bacteria</taxon>
        <taxon>Pseudomonadati</taxon>
        <taxon>Bacteroidota</taxon>
        <taxon>Cytophagia</taxon>
        <taxon>Cytophagales</taxon>
        <taxon>Cytophagaceae</taxon>
        <taxon>Cytophaga</taxon>
    </lineage>
</organism>
<feature type="chain" id="PRO_0000332812" description="Cysteine--tRNA ligase">
    <location>
        <begin position="1"/>
        <end position="497"/>
    </location>
</feature>
<feature type="short sequence motif" description="'HIGH' region">
    <location>
        <begin position="34"/>
        <end position="44"/>
    </location>
</feature>
<feature type="short sequence motif" description="'KMSKS' region">
    <location>
        <begin position="285"/>
        <end position="289"/>
    </location>
</feature>
<feature type="binding site" evidence="1">
    <location>
        <position position="32"/>
    </location>
    <ligand>
        <name>Zn(2+)</name>
        <dbReference type="ChEBI" id="CHEBI:29105"/>
    </ligand>
</feature>
<feature type="binding site" evidence="1">
    <location>
        <position position="228"/>
    </location>
    <ligand>
        <name>Zn(2+)</name>
        <dbReference type="ChEBI" id="CHEBI:29105"/>
    </ligand>
</feature>
<feature type="binding site" evidence="1">
    <location>
        <position position="253"/>
    </location>
    <ligand>
        <name>Zn(2+)</name>
        <dbReference type="ChEBI" id="CHEBI:29105"/>
    </ligand>
</feature>
<feature type="binding site" evidence="1">
    <location>
        <position position="257"/>
    </location>
    <ligand>
        <name>Zn(2+)</name>
        <dbReference type="ChEBI" id="CHEBI:29105"/>
    </ligand>
</feature>
<feature type="binding site" evidence="1">
    <location>
        <position position="288"/>
    </location>
    <ligand>
        <name>ATP</name>
        <dbReference type="ChEBI" id="CHEBI:30616"/>
    </ligand>
</feature>
<protein>
    <recommendedName>
        <fullName evidence="1">Cysteine--tRNA ligase</fullName>
        <ecNumber evidence="1">6.1.1.16</ecNumber>
    </recommendedName>
    <alternativeName>
        <fullName evidence="1">Cysteinyl-tRNA synthetase</fullName>
        <shortName evidence="1">CysRS</shortName>
    </alternativeName>
</protein>
<keyword id="KW-0030">Aminoacyl-tRNA synthetase</keyword>
<keyword id="KW-0067">ATP-binding</keyword>
<keyword id="KW-0963">Cytoplasm</keyword>
<keyword id="KW-0436">Ligase</keyword>
<keyword id="KW-0479">Metal-binding</keyword>
<keyword id="KW-0547">Nucleotide-binding</keyword>
<keyword id="KW-0648">Protein biosynthesis</keyword>
<keyword id="KW-1185">Reference proteome</keyword>
<keyword id="KW-0862">Zinc</keyword>